<organism>
    <name type="scientific">Splachnum sphaericum</name>
    <name type="common">Pinkstink dung moss</name>
    <dbReference type="NCBI Taxonomy" id="61572"/>
    <lineage>
        <taxon>Eukaryota</taxon>
        <taxon>Viridiplantae</taxon>
        <taxon>Streptophyta</taxon>
        <taxon>Embryophyta</taxon>
        <taxon>Bryophyta</taxon>
        <taxon>Bryophytina</taxon>
        <taxon>Bryopsida</taxon>
        <taxon>Bryidae</taxon>
        <taxon>Bryanae</taxon>
        <taxon>Splachnales</taxon>
        <taxon>Splachnaceae</taxon>
        <taxon>Splachnum</taxon>
    </lineage>
</organism>
<accession>Q9FS90</accession>
<protein>
    <recommendedName>
        <fullName evidence="2">Small ribosomal subunit protein uS4c</fullName>
    </recommendedName>
    <alternativeName>
        <fullName>30S ribosomal protein S4, chloroplastic</fullName>
    </alternativeName>
</protein>
<feature type="chain" id="PRO_0000132670" description="Small ribosomal subunit protein uS4c">
    <location>
        <begin position="1"/>
        <end position="202"/>
    </location>
</feature>
<feature type="domain" description="S4 RNA-binding">
    <location>
        <begin position="90"/>
        <end position="153"/>
    </location>
</feature>
<proteinExistence type="inferred from homology"/>
<comment type="function">
    <text evidence="1">One of the primary rRNA binding proteins, it binds directly to 16S rRNA where it nucleates assembly of the body of the 30S subunit.</text>
</comment>
<comment type="function">
    <text evidence="1">With S5 and S12 plays an important role in translational accuracy.</text>
</comment>
<comment type="subunit">
    <text evidence="1">Part of the 30S ribosomal subunit. Contacts protein S5. The interaction surface between S4 and S5 is involved in control of translational fidelity (By similarity).</text>
</comment>
<comment type="subcellular location">
    <subcellularLocation>
        <location>Plastid</location>
        <location>Chloroplast</location>
    </subcellularLocation>
</comment>
<comment type="similarity">
    <text evidence="2">Belongs to the universal ribosomal protein uS4 family.</text>
</comment>
<gene>
    <name type="primary">rps4</name>
</gene>
<evidence type="ECO:0000250" key="1"/>
<evidence type="ECO:0000305" key="2"/>
<geneLocation type="chloroplast"/>
<name>RR4_SPLSP</name>
<reference key="1">
    <citation type="journal article" date="2002" name="Cryptogam. Bryol.">
        <title>The systematic position of the Hypoptergiaceae (Bryopsida) inferred from rps4 gene sequences.</title>
        <authorList>
            <person name="Bloecher R."/>
            <person name="Capesius I."/>
        </authorList>
    </citation>
    <scope>NUCLEOTIDE SEQUENCE [GENOMIC DNA]</scope>
    <source>
        <tissue>Gametophyte</tissue>
    </source>
</reference>
<keyword id="KW-0150">Chloroplast</keyword>
<keyword id="KW-0934">Plastid</keyword>
<keyword id="KW-0687">Ribonucleoprotein</keyword>
<keyword id="KW-0689">Ribosomal protein</keyword>
<keyword id="KW-0694">RNA-binding</keyword>
<keyword id="KW-0699">rRNA-binding</keyword>
<dbReference type="EMBL" id="AJ250183">
    <property type="protein sequence ID" value="CAC12833.1"/>
    <property type="molecule type" value="Genomic_DNA"/>
</dbReference>
<dbReference type="SMR" id="Q9FS90"/>
<dbReference type="GO" id="GO:0009507">
    <property type="term" value="C:chloroplast"/>
    <property type="evidence" value="ECO:0007669"/>
    <property type="project" value="UniProtKB-SubCell"/>
</dbReference>
<dbReference type="GO" id="GO:0015935">
    <property type="term" value="C:small ribosomal subunit"/>
    <property type="evidence" value="ECO:0007669"/>
    <property type="project" value="InterPro"/>
</dbReference>
<dbReference type="GO" id="GO:0019843">
    <property type="term" value="F:rRNA binding"/>
    <property type="evidence" value="ECO:0007669"/>
    <property type="project" value="UniProtKB-UniRule"/>
</dbReference>
<dbReference type="GO" id="GO:0003735">
    <property type="term" value="F:structural constituent of ribosome"/>
    <property type="evidence" value="ECO:0007669"/>
    <property type="project" value="InterPro"/>
</dbReference>
<dbReference type="GO" id="GO:0042274">
    <property type="term" value="P:ribosomal small subunit biogenesis"/>
    <property type="evidence" value="ECO:0007669"/>
    <property type="project" value="TreeGrafter"/>
</dbReference>
<dbReference type="GO" id="GO:0006412">
    <property type="term" value="P:translation"/>
    <property type="evidence" value="ECO:0007669"/>
    <property type="project" value="UniProtKB-UniRule"/>
</dbReference>
<dbReference type="CDD" id="cd00165">
    <property type="entry name" value="S4"/>
    <property type="match status" value="1"/>
</dbReference>
<dbReference type="FunFam" id="1.10.1050.10:FF:000002">
    <property type="entry name" value="30S ribosomal protein S4, chloroplastic"/>
    <property type="match status" value="1"/>
</dbReference>
<dbReference type="FunFam" id="3.10.290.10:FF:000081">
    <property type="entry name" value="30S ribosomal protein S4, chloroplastic"/>
    <property type="match status" value="1"/>
</dbReference>
<dbReference type="Gene3D" id="1.10.1050.10">
    <property type="entry name" value="Ribosomal Protein S4 Delta 41, Chain A, domain 1"/>
    <property type="match status" value="1"/>
</dbReference>
<dbReference type="Gene3D" id="3.10.290.10">
    <property type="entry name" value="RNA-binding S4 domain"/>
    <property type="match status" value="1"/>
</dbReference>
<dbReference type="HAMAP" id="MF_01306_B">
    <property type="entry name" value="Ribosomal_uS4_B"/>
    <property type="match status" value="1"/>
</dbReference>
<dbReference type="InterPro" id="IPR022801">
    <property type="entry name" value="Ribosomal_uS4"/>
</dbReference>
<dbReference type="InterPro" id="IPR005709">
    <property type="entry name" value="Ribosomal_uS4_bac-type"/>
</dbReference>
<dbReference type="InterPro" id="IPR018079">
    <property type="entry name" value="Ribosomal_uS4_CS"/>
</dbReference>
<dbReference type="InterPro" id="IPR001912">
    <property type="entry name" value="Ribosomal_uS4_N"/>
</dbReference>
<dbReference type="InterPro" id="IPR002942">
    <property type="entry name" value="S4_RNA-bd"/>
</dbReference>
<dbReference type="InterPro" id="IPR036986">
    <property type="entry name" value="S4_RNA-bd_sf"/>
</dbReference>
<dbReference type="NCBIfam" id="NF003717">
    <property type="entry name" value="PRK05327.1"/>
    <property type="match status" value="1"/>
</dbReference>
<dbReference type="NCBIfam" id="TIGR01017">
    <property type="entry name" value="rpsD_bact"/>
    <property type="match status" value="1"/>
</dbReference>
<dbReference type="PANTHER" id="PTHR11831">
    <property type="entry name" value="30S 40S RIBOSOMAL PROTEIN"/>
    <property type="match status" value="1"/>
</dbReference>
<dbReference type="PANTHER" id="PTHR11831:SF4">
    <property type="entry name" value="SMALL RIBOSOMAL SUBUNIT PROTEIN US4M"/>
    <property type="match status" value="1"/>
</dbReference>
<dbReference type="Pfam" id="PF00163">
    <property type="entry name" value="Ribosomal_S4"/>
    <property type="match status" value="1"/>
</dbReference>
<dbReference type="Pfam" id="PF01479">
    <property type="entry name" value="S4"/>
    <property type="match status" value="1"/>
</dbReference>
<dbReference type="SMART" id="SM01390">
    <property type="entry name" value="Ribosomal_S4"/>
    <property type="match status" value="1"/>
</dbReference>
<dbReference type="SMART" id="SM00363">
    <property type="entry name" value="S4"/>
    <property type="match status" value="1"/>
</dbReference>
<dbReference type="SUPFAM" id="SSF55174">
    <property type="entry name" value="Alpha-L RNA-binding motif"/>
    <property type="match status" value="1"/>
</dbReference>
<dbReference type="PROSITE" id="PS00632">
    <property type="entry name" value="RIBOSOMAL_S4"/>
    <property type="match status" value="1"/>
</dbReference>
<dbReference type="PROSITE" id="PS50889">
    <property type="entry name" value="S4"/>
    <property type="match status" value="1"/>
</dbReference>
<sequence>MSRYRGPRVRIIRRLGALPGLTNKTPQLKSSPINQSTSNKKISQYRIRLEEKQKLRFHYGITERQLLNYVRIARHAKGSTGEILLQLLEMRLDNIIFRLGMAPTIPGARQLVNHRHILVNEHIVDIPSYRCKPQDFITIKDRQKSQAIISKNIEFYQKYKIPNHLIYNSLKKQGLVNQILDRESIGLKINELLVVEYYSRQA</sequence>